<protein>
    <recommendedName>
        <fullName evidence="1">Arginine biosynthesis bifunctional protein ArgJ, mitochondrial</fullName>
    </recommendedName>
    <domain>
        <recommendedName>
            <fullName evidence="1">Glutamate N-acetyltransferase</fullName>
            <shortName evidence="1">GAT</shortName>
            <ecNumber evidence="1">2.3.1.35</ecNumber>
        </recommendedName>
        <alternativeName>
            <fullName evidence="1">Ornithine acetyltransferase</fullName>
            <shortName evidence="1">OATase</shortName>
        </alternativeName>
        <alternativeName>
            <fullName evidence="1">Ornithine transacetylase</fullName>
        </alternativeName>
    </domain>
    <domain>
        <recommendedName>
            <fullName evidence="1">Amino-acid acetyltransferase</fullName>
            <ecNumber evidence="1">2.3.1.1</ecNumber>
        </recommendedName>
        <alternativeName>
            <fullName evidence="1">N-acetylglutamate synthase</fullName>
            <shortName evidence="1">AGS</shortName>
        </alternativeName>
    </domain>
    <component>
        <recommendedName>
            <fullName evidence="1">Arginine biosynthesis bifunctional protein ArgJ alpha chain</fullName>
        </recommendedName>
    </component>
    <component>
        <recommendedName>
            <fullName evidence="1">Arginine biosynthesis bifunctional protein ArgJ beta chain</fullName>
        </recommendedName>
    </component>
</protein>
<dbReference type="EC" id="2.3.1.35" evidence="1"/>
<dbReference type="EC" id="2.3.1.1" evidence="1"/>
<dbReference type="EMBL" id="ACFL01000033">
    <property type="protein sequence ID" value="EEU08444.1"/>
    <property type="molecule type" value="Genomic_DNA"/>
</dbReference>
<dbReference type="SMR" id="C7GL62"/>
<dbReference type="MEROPS" id="T05.001"/>
<dbReference type="UniPathway" id="UPA00068">
    <property type="reaction ID" value="UER00106"/>
</dbReference>
<dbReference type="UniPathway" id="UPA00068">
    <property type="reaction ID" value="UER00111"/>
</dbReference>
<dbReference type="Proteomes" id="UP000008073">
    <property type="component" value="Unassembled WGS sequence"/>
</dbReference>
<dbReference type="GO" id="GO:0005759">
    <property type="term" value="C:mitochondrial matrix"/>
    <property type="evidence" value="ECO:0007669"/>
    <property type="project" value="UniProtKB-SubCell"/>
</dbReference>
<dbReference type="GO" id="GO:0004358">
    <property type="term" value="F:glutamate N-acetyltransferase activity"/>
    <property type="evidence" value="ECO:0007669"/>
    <property type="project" value="UniProtKB-UniRule"/>
</dbReference>
<dbReference type="GO" id="GO:0004042">
    <property type="term" value="F:L-glutamate N-acetyltransferase activity"/>
    <property type="evidence" value="ECO:0007669"/>
    <property type="project" value="UniProtKB-UniRule"/>
</dbReference>
<dbReference type="GO" id="GO:0006526">
    <property type="term" value="P:L-arginine biosynthetic process"/>
    <property type="evidence" value="ECO:0007669"/>
    <property type="project" value="UniProtKB-UniRule"/>
</dbReference>
<dbReference type="GO" id="GO:0006592">
    <property type="term" value="P:ornithine biosynthetic process"/>
    <property type="evidence" value="ECO:0007669"/>
    <property type="project" value="TreeGrafter"/>
</dbReference>
<dbReference type="CDD" id="cd02152">
    <property type="entry name" value="OAT"/>
    <property type="match status" value="1"/>
</dbReference>
<dbReference type="FunFam" id="3.10.20.340:FF:000002">
    <property type="entry name" value="Arginine biosynthesis bifunctional protein ArgJ, mitochondrial"/>
    <property type="match status" value="1"/>
</dbReference>
<dbReference type="FunFam" id="3.30.2330.10:FF:000001">
    <property type="entry name" value="Arginine biosynthesis bifunctional protein ArgJ, mitochondrial"/>
    <property type="match status" value="1"/>
</dbReference>
<dbReference type="FunFam" id="3.60.70.12:FF:000002">
    <property type="entry name" value="Arginine biosynthesis bifunctional protein ArgJ, mitochondrial"/>
    <property type="match status" value="1"/>
</dbReference>
<dbReference type="Gene3D" id="3.30.2330.10">
    <property type="entry name" value="arginine biosynthesis bifunctional protein suprefamily"/>
    <property type="match status" value="1"/>
</dbReference>
<dbReference type="Gene3D" id="3.10.20.340">
    <property type="entry name" value="ArgJ beta chain, C-terminal domain"/>
    <property type="match status" value="1"/>
</dbReference>
<dbReference type="Gene3D" id="3.60.70.12">
    <property type="entry name" value="L-amino peptidase D-ALA esterase/amidase"/>
    <property type="match status" value="1"/>
</dbReference>
<dbReference type="HAMAP" id="MF_01106">
    <property type="entry name" value="ArgJ"/>
    <property type="match status" value="1"/>
</dbReference>
<dbReference type="InterPro" id="IPR002813">
    <property type="entry name" value="Arg_biosynth_ArgJ"/>
</dbReference>
<dbReference type="InterPro" id="IPR016117">
    <property type="entry name" value="ArgJ-like_dom_sf"/>
</dbReference>
<dbReference type="InterPro" id="IPR042195">
    <property type="entry name" value="ArgJ_beta_C"/>
</dbReference>
<dbReference type="NCBIfam" id="TIGR00120">
    <property type="entry name" value="ArgJ"/>
    <property type="match status" value="1"/>
</dbReference>
<dbReference type="NCBIfam" id="NF003802">
    <property type="entry name" value="PRK05388.1"/>
    <property type="match status" value="1"/>
</dbReference>
<dbReference type="PANTHER" id="PTHR23100">
    <property type="entry name" value="ARGININE BIOSYNTHESIS BIFUNCTIONAL PROTEIN ARGJ"/>
    <property type="match status" value="1"/>
</dbReference>
<dbReference type="PANTHER" id="PTHR23100:SF0">
    <property type="entry name" value="ARGININE BIOSYNTHESIS BIFUNCTIONAL PROTEIN ARGJ, MITOCHONDRIAL"/>
    <property type="match status" value="1"/>
</dbReference>
<dbReference type="Pfam" id="PF01960">
    <property type="entry name" value="ArgJ"/>
    <property type="match status" value="1"/>
</dbReference>
<dbReference type="SUPFAM" id="SSF56266">
    <property type="entry name" value="DmpA/ArgJ-like"/>
    <property type="match status" value="1"/>
</dbReference>
<proteinExistence type="inferred from homology"/>
<name>ARGJ_YEAS2</name>
<gene>
    <name evidence="1" type="primary">ARG7</name>
    <name type="ORF">C1Q_00992</name>
</gene>
<feature type="transit peptide" description="Mitochondrion" evidence="1">
    <location>
        <begin position="1"/>
        <end position="8"/>
    </location>
</feature>
<feature type="chain" id="PRO_0000398098" description="Arginine biosynthesis bifunctional protein ArgJ alpha chain" evidence="1">
    <location>
        <begin position="9"/>
        <end position="214"/>
    </location>
</feature>
<feature type="chain" id="PRO_0000398099" description="Arginine biosynthesis bifunctional protein ArgJ beta chain" evidence="1">
    <location>
        <begin position="215"/>
        <end position="441"/>
    </location>
</feature>
<feature type="active site" description="Nucleophile" evidence="1">
    <location>
        <position position="215"/>
    </location>
</feature>
<feature type="binding site" evidence="1">
    <location>
        <position position="177"/>
    </location>
    <ligand>
        <name>substrate</name>
    </ligand>
</feature>
<feature type="binding site" evidence="1">
    <location>
        <position position="204"/>
    </location>
    <ligand>
        <name>substrate</name>
    </ligand>
</feature>
<feature type="binding site" evidence="1">
    <location>
        <position position="215"/>
    </location>
    <ligand>
        <name>substrate</name>
    </ligand>
</feature>
<feature type="binding site" evidence="1">
    <location>
        <position position="301"/>
    </location>
    <ligand>
        <name>substrate</name>
    </ligand>
</feature>
<feature type="binding site" evidence="1">
    <location>
        <position position="436"/>
    </location>
    <ligand>
        <name>substrate</name>
    </ligand>
</feature>
<feature type="binding site" evidence="1">
    <location>
        <position position="441"/>
    </location>
    <ligand>
        <name>substrate</name>
    </ligand>
</feature>
<feature type="site" description="Involved in the stabilization of negative charge on the oxyanion by the formation of the oxyanion hole" evidence="1">
    <location>
        <position position="136"/>
    </location>
</feature>
<feature type="site" description="Involved in the stabilization of negative charge on the oxyanion by the formation of the oxyanion hole" evidence="1">
    <location>
        <position position="137"/>
    </location>
</feature>
<feature type="site" description="Cleavage; by autolysis" evidence="1">
    <location>
        <begin position="214"/>
        <end position="215"/>
    </location>
</feature>
<comment type="function">
    <text evidence="1">Catalyzes two activities which are involved in the cyclic version of arginine biosynthesis: the synthesis of acetylglutamate from glutamate and acetyl-CoA, and of ornithine by transacetylation between acetylornithine and glutamate.</text>
</comment>
<comment type="catalytic activity">
    <reaction evidence="1">
        <text>N(2)-acetyl-L-ornithine + L-glutamate = N-acetyl-L-glutamate + L-ornithine</text>
        <dbReference type="Rhea" id="RHEA:15349"/>
        <dbReference type="ChEBI" id="CHEBI:29985"/>
        <dbReference type="ChEBI" id="CHEBI:44337"/>
        <dbReference type="ChEBI" id="CHEBI:46911"/>
        <dbReference type="ChEBI" id="CHEBI:57805"/>
        <dbReference type="EC" id="2.3.1.35"/>
    </reaction>
</comment>
<comment type="catalytic activity">
    <reaction evidence="1">
        <text>L-glutamate + acetyl-CoA = N-acetyl-L-glutamate + CoA + H(+)</text>
        <dbReference type="Rhea" id="RHEA:24292"/>
        <dbReference type="ChEBI" id="CHEBI:15378"/>
        <dbReference type="ChEBI" id="CHEBI:29985"/>
        <dbReference type="ChEBI" id="CHEBI:44337"/>
        <dbReference type="ChEBI" id="CHEBI:57287"/>
        <dbReference type="ChEBI" id="CHEBI:57288"/>
        <dbReference type="EC" id="2.3.1.1"/>
    </reaction>
</comment>
<comment type="pathway">
    <text evidence="1">Amino-acid biosynthesis; L-arginine biosynthesis; L-ornithine and N-acetyl-L-glutamate from L-glutamate and N(2)-acetyl-L-ornithine (cyclic): step 1/1.</text>
</comment>
<comment type="pathway">
    <text evidence="1">Amino-acid biosynthesis; L-arginine biosynthesis; N(2)-acetyl-L-ornithine from L-glutamate: step 1/4.</text>
</comment>
<comment type="subunit">
    <text evidence="1">Heterodimer of an alpha and a beta chain.</text>
</comment>
<comment type="subcellular location">
    <subcellularLocation>
        <location evidence="1">Mitochondrion matrix</location>
    </subcellularLocation>
</comment>
<comment type="PTM">
    <text evidence="1">The alpha and beta chains are autoproteolytically processed from a single precursor protein within the mitochondrion.</text>
</comment>
<comment type="similarity">
    <text evidence="1">Belongs to the ArgJ family.</text>
</comment>
<evidence type="ECO:0000255" key="1">
    <source>
        <dbReference type="HAMAP-Rule" id="MF_03124"/>
    </source>
</evidence>
<reference key="1">
    <citation type="journal article" date="2009" name="Genome Res.">
        <title>Genome structure of a Saccharomyces cerevisiae strain widely used in bioethanol production.</title>
        <authorList>
            <person name="Argueso J.L."/>
            <person name="Carazzolle M.F."/>
            <person name="Mieczkowski P.A."/>
            <person name="Duarte F.M."/>
            <person name="Netto O.V.C."/>
            <person name="Missawa S.K."/>
            <person name="Galzerani F."/>
            <person name="Costa G.G.L."/>
            <person name="Vidal R.O."/>
            <person name="Noronha M.F."/>
            <person name="Dominska M."/>
            <person name="Andrietta M.G.S."/>
            <person name="Andrietta S.R."/>
            <person name="Cunha A.F."/>
            <person name="Gomes L.H."/>
            <person name="Tavares F.C.A."/>
            <person name="Alcarde A.R."/>
            <person name="Dietrich F.S."/>
            <person name="McCusker J.H."/>
            <person name="Petes T.D."/>
            <person name="Pereira G.A.G."/>
        </authorList>
    </citation>
    <scope>NUCLEOTIDE SEQUENCE [LARGE SCALE GENOMIC DNA]</scope>
    <source>
        <strain>JAY291</strain>
    </source>
</reference>
<organism>
    <name type="scientific">Saccharomyces cerevisiae (strain JAY291)</name>
    <name type="common">Baker's yeast</name>
    <dbReference type="NCBI Taxonomy" id="574961"/>
    <lineage>
        <taxon>Eukaryota</taxon>
        <taxon>Fungi</taxon>
        <taxon>Dikarya</taxon>
        <taxon>Ascomycota</taxon>
        <taxon>Saccharomycotina</taxon>
        <taxon>Saccharomycetes</taxon>
        <taxon>Saccharomycetales</taxon>
        <taxon>Saccharomycetaceae</taxon>
        <taxon>Saccharomyces</taxon>
    </lineage>
</organism>
<sequence length="441" mass="47849">MRISSTLLQRSKQLIDKYALYVPKTGSFPKGFEVGYTASGVKKNGSLDLGVILNTNKSRPSTAAAVFTTNKFKAAPVLTSKKVLETARGKNINAIVVNSGCANSVTGDLGMKDAQVMIDLVNDKIGQKNSTLVMSTGVIGQRLQMDKISTGINKIFGEEKFGSDFNSWLNVAKSICTTDTFPKLVTSRFKLPSGTEYTLTGMAKGAGMICPNMATLLGFIVTDLPIESKALQKMLTFATTRSFNCISVDGDMSTNDTICMLANGAIDTKEINEDSKDFEQVKLQVTEFAQRLAQLVVRDGEGSTKFVTVNVKNALHFEDAKIIAESISNSMLVKTALYGQDANWGRILCAIGYAKLNDLKSLDVNKINVSFIATDNSEPRELKLVANGVPQLEIDETRASEILALNDLEVSVDLGTGDQAAQFWTCDLSHEYVTINGDYRS</sequence>
<accession>C7GL62</accession>
<keyword id="KW-0012">Acyltransferase</keyword>
<keyword id="KW-0028">Amino-acid biosynthesis</keyword>
<keyword id="KW-0055">Arginine biosynthesis</keyword>
<keyword id="KW-0068">Autocatalytic cleavage</keyword>
<keyword id="KW-0496">Mitochondrion</keyword>
<keyword id="KW-0511">Multifunctional enzyme</keyword>
<keyword id="KW-0808">Transferase</keyword>
<keyword id="KW-0809">Transit peptide</keyword>